<protein>
    <recommendedName>
        <fullName evidence="1">Phosphatidylglycerol--prolipoprotein diacylglyceryl transferase</fullName>
        <ecNumber evidence="1">2.5.1.145</ecNumber>
    </recommendedName>
</protein>
<feature type="chain" id="PRO_1000137394" description="Phosphatidylglycerol--prolipoprotein diacylglyceryl transferase">
    <location>
        <begin position="1"/>
        <end position="264"/>
    </location>
</feature>
<feature type="transmembrane region" description="Helical" evidence="1">
    <location>
        <begin position="14"/>
        <end position="34"/>
    </location>
</feature>
<feature type="transmembrane region" description="Helical" evidence="1">
    <location>
        <begin position="60"/>
        <end position="80"/>
    </location>
</feature>
<feature type="transmembrane region" description="Helical" evidence="1">
    <location>
        <begin position="98"/>
        <end position="118"/>
    </location>
</feature>
<feature type="transmembrane region" description="Helical" evidence="1">
    <location>
        <begin position="128"/>
        <end position="148"/>
    </location>
</feature>
<feature type="transmembrane region" description="Helical" evidence="1">
    <location>
        <begin position="176"/>
        <end position="196"/>
    </location>
</feature>
<feature type="transmembrane region" description="Helical" evidence="1">
    <location>
        <begin position="203"/>
        <end position="223"/>
    </location>
</feature>
<feature type="transmembrane region" description="Helical" evidence="1">
    <location>
        <begin position="240"/>
        <end position="260"/>
    </location>
</feature>
<feature type="binding site" evidence="1">
    <location>
        <position position="143"/>
    </location>
    <ligand>
        <name>a 1,2-diacyl-sn-glycero-3-phospho-(1'-sn-glycerol)</name>
        <dbReference type="ChEBI" id="CHEBI:64716"/>
    </ligand>
</feature>
<gene>
    <name evidence="1" type="primary">lgt</name>
    <name type="ordered locus">APP7_1982</name>
</gene>
<organism>
    <name type="scientific">Actinobacillus pleuropneumoniae serotype 7 (strain AP76)</name>
    <dbReference type="NCBI Taxonomy" id="537457"/>
    <lineage>
        <taxon>Bacteria</taxon>
        <taxon>Pseudomonadati</taxon>
        <taxon>Pseudomonadota</taxon>
        <taxon>Gammaproteobacteria</taxon>
        <taxon>Pasteurellales</taxon>
        <taxon>Pasteurellaceae</taxon>
        <taxon>Actinobacillus</taxon>
    </lineage>
</organism>
<name>LGT_ACTP7</name>
<dbReference type="EC" id="2.5.1.145" evidence="1"/>
<dbReference type="EMBL" id="CP001091">
    <property type="protein sequence ID" value="ACE62634.1"/>
    <property type="molecule type" value="Genomic_DNA"/>
</dbReference>
<dbReference type="RefSeq" id="WP_005599596.1">
    <property type="nucleotide sequence ID" value="NC_010939.1"/>
</dbReference>
<dbReference type="SMR" id="B3H2W4"/>
<dbReference type="GeneID" id="48600199"/>
<dbReference type="KEGG" id="apa:APP7_1982"/>
<dbReference type="HOGENOM" id="CLU_013386_1_0_6"/>
<dbReference type="UniPathway" id="UPA00664"/>
<dbReference type="Proteomes" id="UP000001226">
    <property type="component" value="Chromosome"/>
</dbReference>
<dbReference type="GO" id="GO:0005886">
    <property type="term" value="C:plasma membrane"/>
    <property type="evidence" value="ECO:0007669"/>
    <property type="project" value="UniProtKB-SubCell"/>
</dbReference>
<dbReference type="GO" id="GO:0008961">
    <property type="term" value="F:phosphatidylglycerol-prolipoprotein diacylglyceryl transferase activity"/>
    <property type="evidence" value="ECO:0007669"/>
    <property type="project" value="UniProtKB-UniRule"/>
</dbReference>
<dbReference type="GO" id="GO:0042158">
    <property type="term" value="P:lipoprotein biosynthetic process"/>
    <property type="evidence" value="ECO:0007669"/>
    <property type="project" value="UniProtKB-UniRule"/>
</dbReference>
<dbReference type="HAMAP" id="MF_01147">
    <property type="entry name" value="Lgt"/>
    <property type="match status" value="1"/>
</dbReference>
<dbReference type="InterPro" id="IPR001640">
    <property type="entry name" value="Lgt"/>
</dbReference>
<dbReference type="NCBIfam" id="TIGR00544">
    <property type="entry name" value="lgt"/>
    <property type="match status" value="1"/>
</dbReference>
<dbReference type="PANTHER" id="PTHR30589:SF0">
    <property type="entry name" value="PHOSPHATIDYLGLYCEROL--PROLIPOPROTEIN DIACYLGLYCERYL TRANSFERASE"/>
    <property type="match status" value="1"/>
</dbReference>
<dbReference type="PANTHER" id="PTHR30589">
    <property type="entry name" value="PROLIPOPROTEIN DIACYLGLYCERYL TRANSFERASE"/>
    <property type="match status" value="1"/>
</dbReference>
<dbReference type="Pfam" id="PF01790">
    <property type="entry name" value="LGT"/>
    <property type="match status" value="1"/>
</dbReference>
<dbReference type="PROSITE" id="PS01311">
    <property type="entry name" value="LGT"/>
    <property type="match status" value="1"/>
</dbReference>
<accession>B3H2W4</accession>
<proteinExistence type="inferred from homology"/>
<keyword id="KW-0997">Cell inner membrane</keyword>
<keyword id="KW-1003">Cell membrane</keyword>
<keyword id="KW-0472">Membrane</keyword>
<keyword id="KW-0808">Transferase</keyword>
<keyword id="KW-0812">Transmembrane</keyword>
<keyword id="KW-1133">Transmembrane helix</keyword>
<sequence length="264" mass="30342">MNEQFIQFPQIDPIIFSIGPIALRWYGLMYLIGFGFAYWLGMRRAKNSNGVWTTEQVDQLIYTCFWGVILGGRIGDVFFYNFDRLLQDPMFLFRIWEGGMSFHGGLIGVIVAMIWVSFRQKRSFWNTADFIAPLIPFGLGMGRIGNFINDELWGRITDVPWAVLFPSGGYLPRHPSQLYEFFLEGVVLFFILNWFIKKPRPAGSVAGLFLIGYGVFRFLVEYVRDIDPNVNTVDDLITRGQLLSLPMIIGGLAIMIWAYSRKKA</sequence>
<evidence type="ECO:0000255" key="1">
    <source>
        <dbReference type="HAMAP-Rule" id="MF_01147"/>
    </source>
</evidence>
<reference key="1">
    <citation type="submission" date="2008-06" db="EMBL/GenBank/DDBJ databases">
        <title>Genome and proteome analysis of A. pleuropneumoniae serotype 7.</title>
        <authorList>
            <person name="Linke B."/>
            <person name="Buettner F."/>
            <person name="Martinez-Arias R."/>
            <person name="Goesmann A."/>
            <person name="Baltes N."/>
            <person name="Tegetmeyer H."/>
            <person name="Singh M."/>
            <person name="Gerlach G.F."/>
        </authorList>
    </citation>
    <scope>NUCLEOTIDE SEQUENCE [LARGE SCALE GENOMIC DNA]</scope>
    <source>
        <strain>AP76</strain>
    </source>
</reference>
<comment type="function">
    <text evidence="1">Catalyzes the transfer of the diacylglyceryl group from phosphatidylglycerol to the sulfhydryl group of the N-terminal cysteine of a prolipoprotein, the first step in the formation of mature lipoproteins.</text>
</comment>
<comment type="catalytic activity">
    <reaction evidence="1">
        <text>L-cysteinyl-[prolipoprotein] + a 1,2-diacyl-sn-glycero-3-phospho-(1'-sn-glycerol) = an S-1,2-diacyl-sn-glyceryl-L-cysteinyl-[prolipoprotein] + sn-glycerol 1-phosphate + H(+)</text>
        <dbReference type="Rhea" id="RHEA:56712"/>
        <dbReference type="Rhea" id="RHEA-COMP:14679"/>
        <dbReference type="Rhea" id="RHEA-COMP:14680"/>
        <dbReference type="ChEBI" id="CHEBI:15378"/>
        <dbReference type="ChEBI" id="CHEBI:29950"/>
        <dbReference type="ChEBI" id="CHEBI:57685"/>
        <dbReference type="ChEBI" id="CHEBI:64716"/>
        <dbReference type="ChEBI" id="CHEBI:140658"/>
        <dbReference type="EC" id="2.5.1.145"/>
    </reaction>
</comment>
<comment type="pathway">
    <text evidence="1">Protein modification; lipoprotein biosynthesis (diacylglyceryl transfer).</text>
</comment>
<comment type="subcellular location">
    <subcellularLocation>
        <location evidence="1">Cell inner membrane</location>
        <topology evidence="1">Multi-pass membrane protein</topology>
    </subcellularLocation>
</comment>
<comment type="similarity">
    <text evidence="1">Belongs to the Lgt family.</text>
</comment>